<name>SIGM3_REOVL</name>
<feature type="chain" id="PRO_0000222754" description="Outer capsid protein sigma-3">
    <location>
        <begin position="1"/>
        <end position="365"/>
    </location>
</feature>
<feature type="zinc finger region" description="CCHC-type" evidence="2">
    <location>
        <begin position="51"/>
        <end position="73"/>
    </location>
</feature>
<feature type="sequence conflict" description="In Ref. 2; CAA43783." evidence="4" ref="2">
    <original>D</original>
    <variation>N</variation>
    <location>
        <position position="325"/>
    </location>
</feature>
<feature type="helix" evidence="5">
    <location>
        <begin position="8"/>
        <end position="18"/>
    </location>
</feature>
<feature type="turn" evidence="5">
    <location>
        <begin position="19"/>
        <end position="21"/>
    </location>
</feature>
<feature type="strand" evidence="5">
    <location>
        <begin position="25"/>
        <end position="27"/>
    </location>
</feature>
<feature type="turn" evidence="5">
    <location>
        <begin position="28"/>
        <end position="30"/>
    </location>
</feature>
<feature type="strand" evidence="7">
    <location>
        <begin position="31"/>
        <end position="36"/>
    </location>
</feature>
<feature type="strand" evidence="5">
    <location>
        <begin position="41"/>
        <end position="45"/>
    </location>
</feature>
<feature type="strand" evidence="5">
    <location>
        <begin position="48"/>
        <end position="51"/>
    </location>
</feature>
<feature type="turn" evidence="5">
    <location>
        <begin position="52"/>
        <end position="54"/>
    </location>
</feature>
<feature type="strand" evidence="5">
    <location>
        <begin position="57"/>
        <end position="63"/>
    </location>
</feature>
<feature type="helix" evidence="5">
    <location>
        <begin position="79"/>
        <end position="81"/>
    </location>
</feature>
<feature type="helix" evidence="5">
    <location>
        <begin position="83"/>
        <end position="110"/>
    </location>
</feature>
<feature type="helix" evidence="5">
    <location>
        <begin position="115"/>
        <end position="123"/>
    </location>
</feature>
<feature type="strand" evidence="5">
    <location>
        <begin position="126"/>
        <end position="130"/>
    </location>
</feature>
<feature type="helix" evidence="5">
    <location>
        <begin position="133"/>
        <end position="135"/>
    </location>
</feature>
<feature type="turn" evidence="5">
    <location>
        <begin position="141"/>
        <end position="143"/>
    </location>
</feature>
<feature type="strand" evidence="6">
    <location>
        <begin position="149"/>
        <end position="151"/>
    </location>
</feature>
<feature type="helix" evidence="5">
    <location>
        <begin position="159"/>
        <end position="176"/>
    </location>
</feature>
<feature type="strand" evidence="5">
    <location>
        <begin position="180"/>
        <end position="186"/>
    </location>
</feature>
<feature type="helix" evidence="5">
    <location>
        <begin position="189"/>
        <end position="192"/>
    </location>
</feature>
<feature type="strand" evidence="7">
    <location>
        <begin position="195"/>
        <end position="197"/>
    </location>
</feature>
<feature type="helix" evidence="5">
    <location>
        <begin position="199"/>
        <end position="203"/>
    </location>
</feature>
<feature type="strand" evidence="5">
    <location>
        <begin position="221"/>
        <end position="223"/>
    </location>
</feature>
<feature type="helix" evidence="5">
    <location>
        <begin position="226"/>
        <end position="230"/>
    </location>
</feature>
<feature type="helix" evidence="5">
    <location>
        <begin position="232"/>
        <end position="234"/>
    </location>
</feature>
<feature type="helix" evidence="5">
    <location>
        <begin position="236"/>
        <end position="242"/>
    </location>
</feature>
<feature type="helix" evidence="5">
    <location>
        <begin position="246"/>
        <end position="249"/>
    </location>
</feature>
<feature type="helix" evidence="5">
    <location>
        <begin position="252"/>
        <end position="254"/>
    </location>
</feature>
<feature type="strand" evidence="5">
    <location>
        <begin position="259"/>
        <end position="261"/>
    </location>
</feature>
<feature type="strand" evidence="5">
    <location>
        <begin position="270"/>
        <end position="272"/>
    </location>
</feature>
<feature type="helix" evidence="5">
    <location>
        <begin position="275"/>
        <end position="277"/>
    </location>
</feature>
<feature type="strand" evidence="5">
    <location>
        <begin position="282"/>
        <end position="284"/>
    </location>
</feature>
<feature type="helix" evidence="5">
    <location>
        <begin position="288"/>
        <end position="292"/>
    </location>
</feature>
<feature type="helix" evidence="5">
    <location>
        <begin position="293"/>
        <end position="295"/>
    </location>
</feature>
<feature type="helix" evidence="5">
    <location>
        <begin position="296"/>
        <end position="305"/>
    </location>
</feature>
<feature type="helix" evidence="5">
    <location>
        <begin position="308"/>
        <end position="315"/>
    </location>
</feature>
<feature type="helix" evidence="5">
    <location>
        <begin position="319"/>
        <end position="334"/>
    </location>
</feature>
<feature type="helix" evidence="5">
    <location>
        <begin position="338"/>
        <end position="341"/>
    </location>
</feature>
<feature type="strand" evidence="5">
    <location>
        <begin position="351"/>
        <end position="354"/>
    </location>
</feature>
<feature type="strand" evidence="5">
    <location>
        <begin position="356"/>
        <end position="358"/>
    </location>
</feature>
<feature type="strand" evidence="5">
    <location>
        <begin position="362"/>
        <end position="365"/>
    </location>
</feature>
<sequence>MEVCLPNGHQIVDLINNAFEGRVSIYSAQEGWDKTISAQPDMMVCGGAVVCMHCLGVVGSLQRKLKHLPHHRCNQQIRHQDYVDVQFADRVTAHWKRGMLSFVAQMHAMMNDVSPEDLDRVRTEGGSLVELNWLQVDPNSMFRSIHSSWTDPLQVVDDLDTKLDQYWTALNLMIDSSDLVPNFMMRDPSHAFNGVRLEGDARQTQFSRTFDSRSSLEWGVMVYDYSELEHDPSKGRAYRKELVTPARDFGHFGLSHYSRATTPILGKMPAVFSGMLTGNCKMYPFIKGTAKLKTVRKLVDSVNHAWGVEKIRYALGPGGMTGWYDRTMQQAPIVLTPAALTMFSDTTKFGDLDYPVMIGDPMILG</sequence>
<organismHost>
    <name type="scientific">Mammalia</name>
    <dbReference type="NCBI Taxonomy" id="40674"/>
</organismHost>
<proteinExistence type="evidence at protein level"/>
<protein>
    <recommendedName>
        <fullName>Outer capsid protein sigma-3</fullName>
        <shortName>Sigma3</shortName>
    </recommendedName>
</protein>
<accession>P07939</accession>
<comment type="function">
    <text evidence="1">Stimulates translation by blocking the activation of the dsRNA-dependent protein kinase EIF2AK2/PKR, thereby inhibiting the host interferon response. Sigma3 prevents the activation of EIF2AK2 by competing with the kinase for dsRNA-binding (By similarity).</text>
</comment>
<comment type="function">
    <text evidence="3">The viral outer shell polypeptides, of which sigma-3 is one, impose structural constraints that prevent elongation of nascent transcripts by the RNA-dependent RNA polymerase lambda-3.</text>
</comment>
<comment type="subunit">
    <text evidence="1">Heterohexamer of three sigma-3 and three Mu-1 proteins. The RNA-binding form is probably a homodimer (By similarity).</text>
</comment>
<comment type="subcellular location">
    <subcellularLocation>
        <location evidence="1">Virion</location>
    </subcellularLocation>
    <text evidence="1">Found in the outer capsid. Each subunit is positioned with the small lobe anchoring it to the protein mu1 on the surface of the virion, and the large lobe, the site of initial cleavages during entry-related proteolytic disassembly, protruding outwards (By similarity).</text>
</comment>
<comment type="PTM">
    <text evidence="2">Cleaved during virus the endosomal proteolytic disassembly of the outer capsid.</text>
</comment>
<comment type="similarity">
    <text evidence="4">Belongs to the orthoreovirus sigma-3 protein family.</text>
</comment>
<organism>
    <name type="scientific">Reovirus type 1 (strain Lang)</name>
    <name type="common">T1L</name>
    <name type="synonym">Mammalian orthoreovirus 1</name>
    <dbReference type="NCBI Taxonomy" id="10884"/>
    <lineage>
        <taxon>Viruses</taxon>
        <taxon>Riboviria</taxon>
        <taxon>Orthornavirae</taxon>
        <taxon>Duplornaviricota</taxon>
        <taxon>Resentoviricetes</taxon>
        <taxon>Reovirales</taxon>
        <taxon>Spinareoviridae</taxon>
        <taxon>Orthoreovirus</taxon>
        <taxon>Mammalian orthoreovirus</taxon>
    </lineage>
</organism>
<dbReference type="EMBL" id="M13139">
    <property type="protein sequence ID" value="AAA47272.1"/>
    <property type="molecule type" value="Genomic_RNA"/>
</dbReference>
<dbReference type="EMBL" id="X61586">
    <property type="protein sequence ID" value="CAA43783.1"/>
    <property type="molecule type" value="Genomic_RNA"/>
</dbReference>
<dbReference type="PIR" id="A24245">
    <property type="entry name" value="MNXRS4"/>
</dbReference>
<dbReference type="PDB" id="1JMU">
    <property type="method" value="X-ray"/>
    <property type="resolution" value="2.80 A"/>
    <property type="chains" value="G/H/I=1-365"/>
</dbReference>
<dbReference type="PDB" id="2CSE">
    <property type="method" value="EM"/>
    <property type="resolution" value="7.00 A"/>
    <property type="chains" value="D/E/F/G/H/I/M/N/O/S=1-365"/>
</dbReference>
<dbReference type="PDB" id="6XF8">
    <property type="method" value="EM"/>
    <property type="resolution" value="6.50 A"/>
    <property type="chains" value="G/H/I=1-365"/>
</dbReference>
<dbReference type="PDB" id="6ZTY">
    <property type="method" value="EM"/>
    <property type="chains" value="U/V/W=1-365"/>
</dbReference>
<dbReference type="PDB" id="6ZTZ">
    <property type="method" value="EM"/>
    <property type="chains" value="X/Y/Z=1-365"/>
</dbReference>
<dbReference type="PDBsum" id="1JMU"/>
<dbReference type="PDBsum" id="2CSE"/>
<dbReference type="PDBsum" id="6XF8"/>
<dbReference type="PDBsum" id="6ZTY"/>
<dbReference type="PDBsum" id="6ZTZ"/>
<dbReference type="EMDB" id="EMD-22166"/>
<dbReference type="SMR" id="P07939"/>
<dbReference type="IntAct" id="P07939">
    <property type="interactions" value="10"/>
</dbReference>
<dbReference type="EvolutionaryTrace" id="P07939"/>
<dbReference type="Proteomes" id="UP000007253">
    <property type="component" value="Genome"/>
</dbReference>
<dbReference type="GO" id="GO:0039624">
    <property type="term" value="C:viral outer capsid"/>
    <property type="evidence" value="ECO:0007669"/>
    <property type="project" value="UniProtKB-KW"/>
</dbReference>
<dbReference type="GO" id="GO:0030291">
    <property type="term" value="F:protein serine/threonine kinase inhibitor activity"/>
    <property type="evidence" value="ECO:0007669"/>
    <property type="project" value="UniProtKB-KW"/>
</dbReference>
<dbReference type="GO" id="GO:0003723">
    <property type="term" value="F:RNA binding"/>
    <property type="evidence" value="ECO:0007669"/>
    <property type="project" value="UniProtKB-KW"/>
</dbReference>
<dbReference type="GO" id="GO:0005198">
    <property type="term" value="F:structural molecule activity"/>
    <property type="evidence" value="ECO:0007669"/>
    <property type="project" value="InterPro"/>
</dbReference>
<dbReference type="GO" id="GO:0008270">
    <property type="term" value="F:zinc ion binding"/>
    <property type="evidence" value="ECO:0007669"/>
    <property type="project" value="UniProtKB-KW"/>
</dbReference>
<dbReference type="GO" id="GO:0006417">
    <property type="term" value="P:regulation of translation"/>
    <property type="evidence" value="ECO:0007669"/>
    <property type="project" value="UniProtKB-KW"/>
</dbReference>
<dbReference type="GO" id="GO:0052170">
    <property type="term" value="P:symbiont-mediated suppression of host innate immune response"/>
    <property type="evidence" value="ECO:0007669"/>
    <property type="project" value="UniProtKB-KW"/>
</dbReference>
<dbReference type="GO" id="GO:0039580">
    <property type="term" value="P:symbiont-mediated suppression of host PKR/eIFalpha signaling"/>
    <property type="evidence" value="ECO:0007669"/>
    <property type="project" value="UniProtKB-KW"/>
</dbReference>
<dbReference type="GO" id="GO:0039502">
    <property type="term" value="P:symbiont-mediated suppression of host type I interferon-mediated signaling pathway"/>
    <property type="evidence" value="ECO:0007669"/>
    <property type="project" value="UniProtKB-KW"/>
</dbReference>
<dbReference type="GO" id="GO:0019058">
    <property type="term" value="P:viral life cycle"/>
    <property type="evidence" value="ECO:0007669"/>
    <property type="project" value="InterPro"/>
</dbReference>
<dbReference type="Gene3D" id="3.90.1320.10">
    <property type="entry name" value="Outer-capsid protein sigma 3, large lobe"/>
    <property type="match status" value="1"/>
</dbReference>
<dbReference type="Gene3D" id="3.90.1630.10">
    <property type="entry name" value="Outer-capsid protein sigma 3, small lobe"/>
    <property type="match status" value="1"/>
</dbReference>
<dbReference type="InterPro" id="IPR000153">
    <property type="entry name" value="Reo_capsid_sigma3"/>
</dbReference>
<dbReference type="InterPro" id="IPR023634">
    <property type="entry name" value="Reovirus_capsid_sigma-3_dom_sf"/>
</dbReference>
<dbReference type="Pfam" id="PF00979">
    <property type="entry name" value="Reovirus_cap"/>
    <property type="match status" value="1"/>
</dbReference>
<dbReference type="SUPFAM" id="SSF64465">
    <property type="entry name" value="Outer capsid protein sigma 3"/>
    <property type="match status" value="1"/>
</dbReference>
<keyword id="KW-0002">3D-structure</keyword>
<keyword id="KW-0167">Capsid protein</keyword>
<keyword id="KW-0945">Host-virus interaction</keyword>
<keyword id="KW-1090">Inhibition of host innate immune response by virus</keyword>
<keyword id="KW-1114">Inhibition of host interferon signaling pathway by virus</keyword>
<keyword id="KW-1102">Inhibition of host PKR by virus</keyword>
<keyword id="KW-0922">Interferon antiviral system evasion</keyword>
<keyword id="KW-0479">Metal-binding</keyword>
<keyword id="KW-1152">Outer capsid protein</keyword>
<keyword id="KW-1185">Reference proteome</keyword>
<keyword id="KW-0694">RNA-binding</keyword>
<keyword id="KW-0804">Transcription</keyword>
<keyword id="KW-0805">Transcription regulation</keyword>
<keyword id="KW-0810">Translation regulation</keyword>
<keyword id="KW-0899">Viral immunoevasion</keyword>
<keyword id="KW-0946">Virion</keyword>
<keyword id="KW-0862">Zinc</keyword>
<keyword id="KW-0863">Zinc-finger</keyword>
<evidence type="ECO:0000250" key="1"/>
<evidence type="ECO:0000250" key="2">
    <source>
        <dbReference type="UniProtKB" id="P03527"/>
    </source>
</evidence>
<evidence type="ECO:0000269" key="3">
    <source>
    </source>
</evidence>
<evidence type="ECO:0000305" key="4"/>
<evidence type="ECO:0007829" key="5">
    <source>
        <dbReference type="PDB" id="1JMU"/>
    </source>
</evidence>
<evidence type="ECO:0007829" key="6">
    <source>
        <dbReference type="PDB" id="6ZTY"/>
    </source>
</evidence>
<evidence type="ECO:0007829" key="7">
    <source>
        <dbReference type="PDB" id="6ZTZ"/>
    </source>
</evidence>
<reference key="1">
    <citation type="journal article" date="1986" name="Biochem. Biophys. Res. Commun.">
        <title>Biosynthesis of reovirus-specified polypeptides. Molecular cDNA cloning and nucleotide sequence of the reovirus serotype 1 Lang strain s4 mRNA which encodes the major capsid surface polypeptide sigma 3.</title>
        <authorList>
            <person name="Atwater J.A."/>
            <person name="Manemitsu S.M."/>
            <person name="Samuel C.E."/>
        </authorList>
    </citation>
    <scope>NUCLEOTIDE SEQUENCE [GENOMIC RNA]</scope>
</reference>
<reference key="2">
    <citation type="journal article" date="1992" name="Virology">
        <title>Translational effects and sequence comparisons of the three serotypes of the reovirus S4 gene.</title>
        <authorList>
            <person name="Seliger L.S."/>
            <person name="Giantini M."/>
            <person name="Shatkin A.J."/>
        </authorList>
    </citation>
    <scope>NUCLEOTIDE SEQUENCE [GENOMIC RNA]</scope>
</reference>
<reference key="3">
    <citation type="journal article" date="2000" name="J. Biol. Chem.">
        <title>Transcriptional activities of reovirus RNA polymerase in recoated cores. Initiation and elongation are regulated by separate mechanisms.</title>
        <authorList>
            <person name="Farsetta D.L."/>
            <person name="Chandran K."/>
            <person name="Nibert M.L."/>
        </authorList>
    </citation>
    <scope>FUNCTION</scope>
</reference>
<reference key="4">
    <citation type="journal article" date="2002" name="Cell">
        <title>Structure of the reovirus membrane-penetration protein, Mu1, in a complex with is protector protein, Sigma3.</title>
        <authorList>
            <person name="Liemann S."/>
            <person name="Chandran K."/>
            <person name="Baker T.S."/>
            <person name="Nibert M.L."/>
            <person name="Harrison S.C."/>
        </authorList>
    </citation>
    <scope>X-RAY CRYSTALLOGRAPHY (2.8 ANGSTROMS) IN COMPLEX WITH MU-1</scope>
</reference>
<reference key="5">
    <citation type="journal article" date="2005" name="Structure">
        <title>Features of reovirus outer capsid protein mu1 revealed by electron cryomicroscopy and image reconstruction of the virion at 7.0 Angstrom resolution.</title>
        <authorList>
            <person name="Zhang X."/>
            <person name="Ji Y."/>
            <person name="Zhang L."/>
            <person name="Harrison S.C."/>
            <person name="Marinescu D.C."/>
            <person name="Nibert M.L."/>
            <person name="Baker T.S."/>
        </authorList>
    </citation>
    <scope>STRUCTURE BY ELECTRON MICROSCOPY (7.0 ANGSTROMS)</scope>
</reference>
<gene>
    <name type="primary">S4</name>
</gene>